<sequence length="207" mass="24060">MARYRGPVVKIMRREGVDLFLKSSYTFNKDKFHRKGPPGMPTKRKGKVSEYGTQLREKQKLKRAYGLLEKQFRNYYEEASHSHGVTGEILLQLLERRLDNVVYRLGFAVTRRQARNFIAHRHVLVNGERVDIPSYRLNVGDKVEIREKFRASTFIADNIRLSQSLQGIPSWLSADYTNFGGDVTALPERHHIDLPVKEQVIVELYSK</sequence>
<accession>Q055B8</accession>
<reference key="1">
    <citation type="journal article" date="2006" name="Proc. Natl. Acad. Sci. U.S.A.">
        <title>Genome reduction in Leptospira borgpetersenii reflects limited transmission potential.</title>
        <authorList>
            <person name="Bulach D.M."/>
            <person name="Zuerner R.L."/>
            <person name="Wilson P."/>
            <person name="Seemann T."/>
            <person name="McGrath A."/>
            <person name="Cullen P.A."/>
            <person name="Davis J."/>
            <person name="Johnson M."/>
            <person name="Kuczek E."/>
            <person name="Alt D.P."/>
            <person name="Peterson-Burch B."/>
            <person name="Coppel R.L."/>
            <person name="Rood J.I."/>
            <person name="Davies J.K."/>
            <person name="Adler B."/>
        </authorList>
    </citation>
    <scope>NUCLEOTIDE SEQUENCE [LARGE SCALE GENOMIC DNA]</scope>
    <source>
        <strain>L550</strain>
    </source>
</reference>
<name>RS4_LEPBL</name>
<evidence type="ECO:0000255" key="1">
    <source>
        <dbReference type="HAMAP-Rule" id="MF_01306"/>
    </source>
</evidence>
<evidence type="ECO:0000305" key="2"/>
<keyword id="KW-0687">Ribonucleoprotein</keyword>
<keyword id="KW-0689">Ribosomal protein</keyword>
<keyword id="KW-0694">RNA-binding</keyword>
<keyword id="KW-0699">rRNA-binding</keyword>
<gene>
    <name evidence="1" type="primary">rpsD1</name>
    <name type="synonym">rpsD-1</name>
    <name type="ordered locus">LBL_0439</name>
</gene>
<gene>
    <name evidence="1" type="primary">rpsD2</name>
    <name type="synonym">rpsD</name>
    <name type="ordered locus">LBL_0479</name>
</gene>
<protein>
    <recommendedName>
        <fullName evidence="1">Small ribosomal subunit protein uS4</fullName>
    </recommendedName>
    <alternativeName>
        <fullName evidence="2">30S ribosomal protein S4</fullName>
    </alternativeName>
</protein>
<feature type="chain" id="PRO_0000293303" description="Small ribosomal subunit protein uS4">
    <location>
        <begin position="1"/>
        <end position="207"/>
    </location>
</feature>
<feature type="domain" description="S4 RNA-binding" evidence="1">
    <location>
        <begin position="96"/>
        <end position="159"/>
    </location>
</feature>
<comment type="function">
    <text evidence="1">One of the primary rRNA binding proteins, it binds directly to 16S rRNA where it nucleates assembly of the body of the 30S subunit.</text>
</comment>
<comment type="function">
    <text evidence="1">With S5 and S12 plays an important role in translational accuracy.</text>
</comment>
<comment type="subunit">
    <text evidence="1">Part of the 30S ribosomal subunit. Contacts protein S5. The interaction surface between S4 and S5 is involved in control of translational fidelity.</text>
</comment>
<comment type="similarity">
    <text evidence="1">Belongs to the universal ribosomal protein uS4 family.</text>
</comment>
<proteinExistence type="inferred from homology"/>
<organism>
    <name type="scientific">Leptospira borgpetersenii serovar Hardjo-bovis (strain L550)</name>
    <dbReference type="NCBI Taxonomy" id="355276"/>
    <lineage>
        <taxon>Bacteria</taxon>
        <taxon>Pseudomonadati</taxon>
        <taxon>Spirochaetota</taxon>
        <taxon>Spirochaetia</taxon>
        <taxon>Leptospirales</taxon>
        <taxon>Leptospiraceae</taxon>
        <taxon>Leptospira</taxon>
    </lineage>
</organism>
<dbReference type="EMBL" id="CP000348">
    <property type="protein sequence ID" value="ABJ78037.1"/>
    <property type="molecule type" value="Genomic_DNA"/>
</dbReference>
<dbReference type="EMBL" id="CP000348">
    <property type="protein sequence ID" value="ABJ78077.1"/>
    <property type="molecule type" value="Genomic_DNA"/>
</dbReference>
<dbReference type="RefSeq" id="WP_011669443.1">
    <property type="nucleotide sequence ID" value="NC_008508.1"/>
</dbReference>
<dbReference type="SMR" id="Q055B8"/>
<dbReference type="KEGG" id="lbl:LBL_0439"/>
<dbReference type="KEGG" id="lbl:LBL_0479"/>
<dbReference type="PATRIC" id="fig|355276.3.peg.538"/>
<dbReference type="HOGENOM" id="CLU_092403_0_2_12"/>
<dbReference type="GO" id="GO:0015935">
    <property type="term" value="C:small ribosomal subunit"/>
    <property type="evidence" value="ECO:0007669"/>
    <property type="project" value="InterPro"/>
</dbReference>
<dbReference type="GO" id="GO:0019843">
    <property type="term" value="F:rRNA binding"/>
    <property type="evidence" value="ECO:0007669"/>
    <property type="project" value="UniProtKB-UniRule"/>
</dbReference>
<dbReference type="GO" id="GO:0003735">
    <property type="term" value="F:structural constituent of ribosome"/>
    <property type="evidence" value="ECO:0007669"/>
    <property type="project" value="InterPro"/>
</dbReference>
<dbReference type="GO" id="GO:0042274">
    <property type="term" value="P:ribosomal small subunit biogenesis"/>
    <property type="evidence" value="ECO:0007669"/>
    <property type="project" value="TreeGrafter"/>
</dbReference>
<dbReference type="GO" id="GO:0006412">
    <property type="term" value="P:translation"/>
    <property type="evidence" value="ECO:0007669"/>
    <property type="project" value="UniProtKB-UniRule"/>
</dbReference>
<dbReference type="CDD" id="cd00165">
    <property type="entry name" value="S4"/>
    <property type="match status" value="1"/>
</dbReference>
<dbReference type="FunFam" id="3.10.290.10:FF:000001">
    <property type="entry name" value="30S ribosomal protein S4"/>
    <property type="match status" value="1"/>
</dbReference>
<dbReference type="Gene3D" id="1.10.1050.10">
    <property type="entry name" value="Ribosomal Protein S4 Delta 41, Chain A, domain 1"/>
    <property type="match status" value="1"/>
</dbReference>
<dbReference type="Gene3D" id="3.10.290.10">
    <property type="entry name" value="RNA-binding S4 domain"/>
    <property type="match status" value="1"/>
</dbReference>
<dbReference type="HAMAP" id="MF_01306_B">
    <property type="entry name" value="Ribosomal_uS4_B"/>
    <property type="match status" value="1"/>
</dbReference>
<dbReference type="InterPro" id="IPR022801">
    <property type="entry name" value="Ribosomal_uS4"/>
</dbReference>
<dbReference type="InterPro" id="IPR005709">
    <property type="entry name" value="Ribosomal_uS4_bac-type"/>
</dbReference>
<dbReference type="InterPro" id="IPR018079">
    <property type="entry name" value="Ribosomal_uS4_CS"/>
</dbReference>
<dbReference type="InterPro" id="IPR001912">
    <property type="entry name" value="Ribosomal_uS4_N"/>
</dbReference>
<dbReference type="InterPro" id="IPR002942">
    <property type="entry name" value="S4_RNA-bd"/>
</dbReference>
<dbReference type="InterPro" id="IPR036986">
    <property type="entry name" value="S4_RNA-bd_sf"/>
</dbReference>
<dbReference type="NCBIfam" id="NF003717">
    <property type="entry name" value="PRK05327.1"/>
    <property type="match status" value="1"/>
</dbReference>
<dbReference type="NCBIfam" id="TIGR01017">
    <property type="entry name" value="rpsD_bact"/>
    <property type="match status" value="1"/>
</dbReference>
<dbReference type="PANTHER" id="PTHR11831">
    <property type="entry name" value="30S 40S RIBOSOMAL PROTEIN"/>
    <property type="match status" value="1"/>
</dbReference>
<dbReference type="PANTHER" id="PTHR11831:SF4">
    <property type="entry name" value="SMALL RIBOSOMAL SUBUNIT PROTEIN US4M"/>
    <property type="match status" value="1"/>
</dbReference>
<dbReference type="Pfam" id="PF00163">
    <property type="entry name" value="Ribosomal_S4"/>
    <property type="match status" value="1"/>
</dbReference>
<dbReference type="Pfam" id="PF01479">
    <property type="entry name" value="S4"/>
    <property type="match status" value="1"/>
</dbReference>
<dbReference type="SMART" id="SM01390">
    <property type="entry name" value="Ribosomal_S4"/>
    <property type="match status" value="1"/>
</dbReference>
<dbReference type="SMART" id="SM00363">
    <property type="entry name" value="S4"/>
    <property type="match status" value="1"/>
</dbReference>
<dbReference type="SUPFAM" id="SSF55174">
    <property type="entry name" value="Alpha-L RNA-binding motif"/>
    <property type="match status" value="1"/>
</dbReference>
<dbReference type="PROSITE" id="PS00632">
    <property type="entry name" value="RIBOSOMAL_S4"/>
    <property type="match status" value="1"/>
</dbReference>
<dbReference type="PROSITE" id="PS50889">
    <property type="entry name" value="S4"/>
    <property type="match status" value="1"/>
</dbReference>